<organism>
    <name type="scientific">Helicobacter pylori (strain J99 / ATCC 700824)</name>
    <name type="common">Campylobacter pylori J99</name>
    <dbReference type="NCBI Taxonomy" id="85963"/>
    <lineage>
        <taxon>Bacteria</taxon>
        <taxon>Pseudomonadati</taxon>
        <taxon>Campylobacterota</taxon>
        <taxon>Epsilonproteobacteria</taxon>
        <taxon>Campylobacterales</taxon>
        <taxon>Helicobacteraceae</taxon>
        <taxon>Helicobacter</taxon>
    </lineage>
</organism>
<reference key="1">
    <citation type="journal article" date="1999" name="Nature">
        <title>Genomic sequence comparison of two unrelated isolates of the human gastric pathogen Helicobacter pylori.</title>
        <authorList>
            <person name="Alm R.A."/>
            <person name="Ling L.-S.L."/>
            <person name="Moir D.T."/>
            <person name="King B.L."/>
            <person name="Brown E.D."/>
            <person name="Doig P.C."/>
            <person name="Smith D.R."/>
            <person name="Noonan B."/>
            <person name="Guild B.C."/>
            <person name="deJonge B.L."/>
            <person name="Carmel G."/>
            <person name="Tummino P.J."/>
            <person name="Caruso A."/>
            <person name="Uria-Nickelsen M."/>
            <person name="Mills D.M."/>
            <person name="Ives C."/>
            <person name="Gibson R."/>
            <person name="Merberg D."/>
            <person name="Mills S.D."/>
            <person name="Jiang Q."/>
            <person name="Taylor D.E."/>
            <person name="Vovis G.F."/>
            <person name="Trust T.J."/>
        </authorList>
    </citation>
    <scope>NUCLEOTIDE SEQUENCE [LARGE SCALE GENOMIC DNA]</scope>
    <source>
        <strain>J99 / ATCC 700824</strain>
    </source>
</reference>
<name>HEM3_HELPJ</name>
<evidence type="ECO:0000250" key="1"/>
<evidence type="ECO:0000305" key="2"/>
<gene>
    <name type="primary">hemC</name>
    <name type="ordered locus">jhp_0222</name>
</gene>
<comment type="function">
    <text evidence="1">Tetrapolymerization of the monopyrrole PBG into the hydroxymethylbilane pre-uroporphyrinogen in several discrete steps.</text>
</comment>
<comment type="catalytic activity">
    <reaction>
        <text>4 porphobilinogen + H2O = hydroxymethylbilane + 4 NH4(+)</text>
        <dbReference type="Rhea" id="RHEA:13185"/>
        <dbReference type="ChEBI" id="CHEBI:15377"/>
        <dbReference type="ChEBI" id="CHEBI:28938"/>
        <dbReference type="ChEBI" id="CHEBI:57845"/>
        <dbReference type="ChEBI" id="CHEBI:58126"/>
        <dbReference type="EC" id="2.5.1.61"/>
    </reaction>
</comment>
<comment type="cofactor">
    <cofactor evidence="1">
        <name>dipyrromethane</name>
        <dbReference type="ChEBI" id="CHEBI:60342"/>
    </cofactor>
    <text evidence="1">Binds 1 dipyrromethane group covalently.</text>
</comment>
<comment type="pathway">
    <text>Porphyrin-containing compound metabolism; protoporphyrin-IX biosynthesis; coproporphyrinogen-III from 5-aminolevulinate: step 2/4.</text>
</comment>
<comment type="subunit">
    <text evidence="1">Monomer.</text>
</comment>
<comment type="miscellaneous">
    <text evidence="1">The porphobilinogen subunits are added to the dipyrromethane group.</text>
</comment>
<comment type="similarity">
    <text evidence="2">Belongs to the HMBS family.</text>
</comment>
<proteinExistence type="inferred from homology"/>
<accession>Q9ZMJ7</accession>
<feature type="chain" id="PRO_0000142946" description="Porphobilinogen deaminase">
    <location>
        <begin position="1"/>
        <end position="306"/>
    </location>
</feature>
<feature type="modified residue" description="S-(dipyrrolylmethanemethyl)cysteine" evidence="1">
    <location>
        <position position="239"/>
    </location>
</feature>
<protein>
    <recommendedName>
        <fullName>Porphobilinogen deaminase</fullName>
        <shortName>PBG</shortName>
        <ecNumber>2.5.1.61</ecNumber>
    </recommendedName>
    <alternativeName>
        <fullName>Hydroxymethylbilane synthase</fullName>
        <shortName>HMBS</shortName>
    </alternativeName>
    <alternativeName>
        <fullName>Pre-uroporphyrinogen synthase</fullName>
    </alternativeName>
</protein>
<dbReference type="EC" id="2.5.1.61"/>
<dbReference type="EMBL" id="AE001439">
    <property type="protein sequence ID" value="AAD05809.1"/>
    <property type="molecule type" value="Genomic_DNA"/>
</dbReference>
<dbReference type="PIR" id="A71959">
    <property type="entry name" value="A71959"/>
</dbReference>
<dbReference type="RefSeq" id="WP_000413818.1">
    <property type="nucleotide sequence ID" value="NC_000921.1"/>
</dbReference>
<dbReference type="SMR" id="Q9ZMJ7"/>
<dbReference type="KEGG" id="hpj:jhp_0222"/>
<dbReference type="PATRIC" id="fig|85963.30.peg.792"/>
<dbReference type="eggNOG" id="COG0181">
    <property type="taxonomic scope" value="Bacteria"/>
</dbReference>
<dbReference type="UniPathway" id="UPA00251">
    <property type="reaction ID" value="UER00319"/>
</dbReference>
<dbReference type="Proteomes" id="UP000000804">
    <property type="component" value="Chromosome"/>
</dbReference>
<dbReference type="GO" id="GO:0005737">
    <property type="term" value="C:cytoplasm"/>
    <property type="evidence" value="ECO:0007669"/>
    <property type="project" value="TreeGrafter"/>
</dbReference>
<dbReference type="GO" id="GO:0004418">
    <property type="term" value="F:hydroxymethylbilane synthase activity"/>
    <property type="evidence" value="ECO:0007669"/>
    <property type="project" value="UniProtKB-UniRule"/>
</dbReference>
<dbReference type="GO" id="GO:0006782">
    <property type="term" value="P:protoporphyrinogen IX biosynthetic process"/>
    <property type="evidence" value="ECO:0007669"/>
    <property type="project" value="UniProtKB-UniRule"/>
</dbReference>
<dbReference type="CDD" id="cd13646">
    <property type="entry name" value="PBP2_EcHMBS_like"/>
    <property type="match status" value="1"/>
</dbReference>
<dbReference type="FunFam" id="3.40.190.10:FF:000004">
    <property type="entry name" value="Porphobilinogen deaminase"/>
    <property type="match status" value="1"/>
</dbReference>
<dbReference type="FunFam" id="3.40.190.10:FF:000005">
    <property type="entry name" value="Porphobilinogen deaminase"/>
    <property type="match status" value="1"/>
</dbReference>
<dbReference type="Gene3D" id="3.40.190.10">
    <property type="entry name" value="Periplasmic binding protein-like II"/>
    <property type="match status" value="2"/>
</dbReference>
<dbReference type="Gene3D" id="3.30.160.40">
    <property type="entry name" value="Porphobilinogen deaminase, C-terminal domain"/>
    <property type="match status" value="1"/>
</dbReference>
<dbReference type="HAMAP" id="MF_00260">
    <property type="entry name" value="Porphobil_deam"/>
    <property type="match status" value="1"/>
</dbReference>
<dbReference type="InterPro" id="IPR000860">
    <property type="entry name" value="HemC"/>
</dbReference>
<dbReference type="InterPro" id="IPR022419">
    <property type="entry name" value="Porphobilin_deaminase_cofac_BS"/>
</dbReference>
<dbReference type="InterPro" id="IPR022417">
    <property type="entry name" value="Porphobilin_deaminase_N"/>
</dbReference>
<dbReference type="InterPro" id="IPR022418">
    <property type="entry name" value="Porphobilinogen_deaminase_C"/>
</dbReference>
<dbReference type="InterPro" id="IPR036803">
    <property type="entry name" value="Porphobilinogen_deaminase_C_sf"/>
</dbReference>
<dbReference type="NCBIfam" id="TIGR00212">
    <property type="entry name" value="hemC"/>
    <property type="match status" value="1"/>
</dbReference>
<dbReference type="PANTHER" id="PTHR11557">
    <property type="entry name" value="PORPHOBILINOGEN DEAMINASE"/>
    <property type="match status" value="1"/>
</dbReference>
<dbReference type="PANTHER" id="PTHR11557:SF0">
    <property type="entry name" value="PORPHOBILINOGEN DEAMINASE"/>
    <property type="match status" value="1"/>
</dbReference>
<dbReference type="Pfam" id="PF01379">
    <property type="entry name" value="Porphobil_deam"/>
    <property type="match status" value="1"/>
</dbReference>
<dbReference type="Pfam" id="PF03900">
    <property type="entry name" value="Porphobil_deamC"/>
    <property type="match status" value="1"/>
</dbReference>
<dbReference type="PIRSF" id="PIRSF001438">
    <property type="entry name" value="4pyrrol_synth_OHMeBilane_synth"/>
    <property type="match status" value="1"/>
</dbReference>
<dbReference type="PRINTS" id="PR00151">
    <property type="entry name" value="PORPHBDMNASE"/>
</dbReference>
<dbReference type="SUPFAM" id="SSF53850">
    <property type="entry name" value="Periplasmic binding protein-like II"/>
    <property type="match status" value="1"/>
</dbReference>
<dbReference type="SUPFAM" id="SSF54782">
    <property type="entry name" value="Porphobilinogen deaminase (hydroxymethylbilane synthase), C-terminal domain"/>
    <property type="match status" value="1"/>
</dbReference>
<dbReference type="PROSITE" id="PS00533">
    <property type="entry name" value="PORPHOBILINOGEN_DEAM"/>
    <property type="match status" value="1"/>
</dbReference>
<sequence length="306" mass="34014">MEKLVIGSRGSELALWQANHIKERLKKECSMESEIRIVKTTGDKILDAPLNKIGGKGLFTKELEELLLKGAIDLAVHSLKDVPVVFEKGLDLACITKRADVRDTFLSVKFPDLMSLPKGAKVGTTSLRRSMQIKFKRKDLDTESLRGNVQTRLKKLECGEFDAIILAEAGLCRLNVQGAKYRKAFSVKEMIPSMGQGALGVEMLKNHKHFITLQKLNNEESAFCCHLEREFIKGLNGGCQIPIGVHANLMGDEVKIRAVLGLPNGKEVIAKEKQGDKTKAFDLVQELLEEFLQSGAKEILEKAQLF</sequence>
<keyword id="KW-0627">Porphyrin biosynthesis</keyword>
<keyword id="KW-0808">Transferase</keyword>